<keyword id="KW-0007">Acetylation</keyword>
<keyword id="KW-0119">Carbohydrate metabolism</keyword>
<keyword id="KW-0413">Isomerase</keyword>
<keyword id="KW-0521">NADP</keyword>
<protein>
    <recommendedName>
        <fullName evidence="1">ADP-L-glycero-D-manno-heptose-6-epimerase</fullName>
        <ecNumber evidence="1">5.1.3.20</ecNumber>
    </recommendedName>
    <alternativeName>
        <fullName evidence="1">ADP-L-glycero-beta-D-manno-heptose-6-epimerase</fullName>
        <shortName evidence="1">ADP-glyceromanno-heptose 6-epimerase</shortName>
        <shortName evidence="1">ADP-hep 6-epimerase</shortName>
        <shortName evidence="1">AGME</shortName>
    </alternativeName>
</protein>
<name>HLDD_ESCF3</name>
<organism>
    <name type="scientific">Escherichia fergusonii (strain ATCC 35469 / DSM 13698 / CCUG 18766 / IAM 14443 / JCM 21226 / LMG 7866 / NBRC 102419 / NCTC 12128 / CDC 0568-73)</name>
    <dbReference type="NCBI Taxonomy" id="585054"/>
    <lineage>
        <taxon>Bacteria</taxon>
        <taxon>Pseudomonadati</taxon>
        <taxon>Pseudomonadota</taxon>
        <taxon>Gammaproteobacteria</taxon>
        <taxon>Enterobacterales</taxon>
        <taxon>Enterobacteriaceae</taxon>
        <taxon>Escherichia</taxon>
    </lineage>
</organism>
<gene>
    <name evidence="1" type="primary">hldD</name>
    <name type="ordered locus">EFER_3908</name>
</gene>
<proteinExistence type="inferred from homology"/>
<reference key="1">
    <citation type="journal article" date="2009" name="PLoS Genet.">
        <title>Organised genome dynamics in the Escherichia coli species results in highly diverse adaptive paths.</title>
        <authorList>
            <person name="Touchon M."/>
            <person name="Hoede C."/>
            <person name="Tenaillon O."/>
            <person name="Barbe V."/>
            <person name="Baeriswyl S."/>
            <person name="Bidet P."/>
            <person name="Bingen E."/>
            <person name="Bonacorsi S."/>
            <person name="Bouchier C."/>
            <person name="Bouvet O."/>
            <person name="Calteau A."/>
            <person name="Chiapello H."/>
            <person name="Clermont O."/>
            <person name="Cruveiller S."/>
            <person name="Danchin A."/>
            <person name="Diard M."/>
            <person name="Dossat C."/>
            <person name="Karoui M.E."/>
            <person name="Frapy E."/>
            <person name="Garry L."/>
            <person name="Ghigo J.M."/>
            <person name="Gilles A.M."/>
            <person name="Johnson J."/>
            <person name="Le Bouguenec C."/>
            <person name="Lescat M."/>
            <person name="Mangenot S."/>
            <person name="Martinez-Jehanne V."/>
            <person name="Matic I."/>
            <person name="Nassif X."/>
            <person name="Oztas S."/>
            <person name="Petit M.A."/>
            <person name="Pichon C."/>
            <person name="Rouy Z."/>
            <person name="Ruf C.S."/>
            <person name="Schneider D."/>
            <person name="Tourret J."/>
            <person name="Vacherie B."/>
            <person name="Vallenet D."/>
            <person name="Medigue C."/>
            <person name="Rocha E.P.C."/>
            <person name="Denamur E."/>
        </authorList>
    </citation>
    <scope>NUCLEOTIDE SEQUENCE [LARGE SCALE GENOMIC DNA]</scope>
    <source>
        <strain>ATCC 35469 / DSM 13698 / BCRC 15582 / CCUG 18766 / IAM 14443 / JCM 21226 / LMG 7866 / NBRC 102419 / NCTC 12128 / CDC 0568-73</strain>
    </source>
</reference>
<accession>B7LVH8</accession>
<evidence type="ECO:0000255" key="1">
    <source>
        <dbReference type="HAMAP-Rule" id="MF_01601"/>
    </source>
</evidence>
<comment type="function">
    <text evidence="1">Catalyzes the interconversion between ADP-D-glycero-beta-D-manno-heptose and ADP-L-glycero-beta-D-manno-heptose via an epimerization at carbon 6 of the heptose.</text>
</comment>
<comment type="catalytic activity">
    <reaction evidence="1">
        <text>ADP-D-glycero-beta-D-manno-heptose = ADP-L-glycero-beta-D-manno-heptose</text>
        <dbReference type="Rhea" id="RHEA:17577"/>
        <dbReference type="ChEBI" id="CHEBI:59967"/>
        <dbReference type="ChEBI" id="CHEBI:61506"/>
        <dbReference type="EC" id="5.1.3.20"/>
    </reaction>
</comment>
<comment type="cofactor">
    <cofactor evidence="1">
        <name>NADP(+)</name>
        <dbReference type="ChEBI" id="CHEBI:58349"/>
    </cofactor>
    <text evidence="1">Binds 1 NADP(+) per subunit.</text>
</comment>
<comment type="pathway">
    <text evidence="1">Nucleotide-sugar biosynthesis; ADP-L-glycero-beta-D-manno-heptose biosynthesis; ADP-L-glycero-beta-D-manno-heptose from D-glycero-beta-D-manno-heptose 7-phosphate: step 4/4.</text>
</comment>
<comment type="subunit">
    <text evidence="1">Homopentamer.</text>
</comment>
<comment type="domain">
    <text evidence="1">Contains a large N-terminal NADP-binding domain, and a smaller C-terminal substrate-binding domain.</text>
</comment>
<comment type="similarity">
    <text evidence="1">Belongs to the NAD(P)-dependent epimerase/dehydratase family. HldD subfamily.</text>
</comment>
<dbReference type="EC" id="5.1.3.20" evidence="1"/>
<dbReference type="EMBL" id="CU928158">
    <property type="protein sequence ID" value="CAQ91342.1"/>
    <property type="molecule type" value="Genomic_DNA"/>
</dbReference>
<dbReference type="SMR" id="B7LVH8"/>
<dbReference type="KEGG" id="efe:EFER_3908"/>
<dbReference type="HOGENOM" id="CLU_007383_1_3_6"/>
<dbReference type="OrthoDB" id="9803010at2"/>
<dbReference type="UniPathway" id="UPA00356">
    <property type="reaction ID" value="UER00440"/>
</dbReference>
<dbReference type="Proteomes" id="UP000000745">
    <property type="component" value="Chromosome"/>
</dbReference>
<dbReference type="GO" id="GO:0008712">
    <property type="term" value="F:ADP-glyceromanno-heptose 6-epimerase activity"/>
    <property type="evidence" value="ECO:0007669"/>
    <property type="project" value="UniProtKB-UniRule"/>
</dbReference>
<dbReference type="GO" id="GO:0050661">
    <property type="term" value="F:NADP binding"/>
    <property type="evidence" value="ECO:0007669"/>
    <property type="project" value="InterPro"/>
</dbReference>
<dbReference type="GO" id="GO:0097171">
    <property type="term" value="P:ADP-L-glycero-beta-D-manno-heptose biosynthetic process"/>
    <property type="evidence" value="ECO:0007669"/>
    <property type="project" value="UniProtKB-UniPathway"/>
</dbReference>
<dbReference type="GO" id="GO:0005975">
    <property type="term" value="P:carbohydrate metabolic process"/>
    <property type="evidence" value="ECO:0007669"/>
    <property type="project" value="UniProtKB-UniRule"/>
</dbReference>
<dbReference type="CDD" id="cd05248">
    <property type="entry name" value="ADP_GME_SDR_e"/>
    <property type="match status" value="1"/>
</dbReference>
<dbReference type="Gene3D" id="3.40.50.720">
    <property type="entry name" value="NAD(P)-binding Rossmann-like Domain"/>
    <property type="match status" value="1"/>
</dbReference>
<dbReference type="Gene3D" id="3.90.25.10">
    <property type="entry name" value="UDP-galactose 4-epimerase, domain 1"/>
    <property type="match status" value="1"/>
</dbReference>
<dbReference type="HAMAP" id="MF_01601">
    <property type="entry name" value="Heptose_epimerase"/>
    <property type="match status" value="1"/>
</dbReference>
<dbReference type="InterPro" id="IPR001509">
    <property type="entry name" value="Epimerase_deHydtase"/>
</dbReference>
<dbReference type="InterPro" id="IPR011912">
    <property type="entry name" value="Heptose_epim"/>
</dbReference>
<dbReference type="InterPro" id="IPR036291">
    <property type="entry name" value="NAD(P)-bd_dom_sf"/>
</dbReference>
<dbReference type="NCBIfam" id="TIGR02197">
    <property type="entry name" value="heptose_epim"/>
    <property type="match status" value="1"/>
</dbReference>
<dbReference type="NCBIfam" id="NF008360">
    <property type="entry name" value="PRK11150.1"/>
    <property type="match status" value="1"/>
</dbReference>
<dbReference type="PANTHER" id="PTHR43103:SF3">
    <property type="entry name" value="ADP-L-GLYCERO-D-MANNO-HEPTOSE-6-EPIMERASE"/>
    <property type="match status" value="1"/>
</dbReference>
<dbReference type="PANTHER" id="PTHR43103">
    <property type="entry name" value="NUCLEOSIDE-DIPHOSPHATE-SUGAR EPIMERASE"/>
    <property type="match status" value="1"/>
</dbReference>
<dbReference type="Pfam" id="PF01370">
    <property type="entry name" value="Epimerase"/>
    <property type="match status" value="1"/>
</dbReference>
<dbReference type="SUPFAM" id="SSF51735">
    <property type="entry name" value="NAD(P)-binding Rossmann-fold domains"/>
    <property type="match status" value="1"/>
</dbReference>
<sequence>MIIVTGGAGFIGSNIVKALNDKGITDILVVDNLKDGTKFVNLVDLNIADYMDKEDFLIQIMAGEEFGDVEAIFHEGACSSTTEWDGKYMMDNNYQYSKELLHYCLEREIPFLYASSAATYGGRTSDFIESREYEKPLNVYGYSKFLFDEYVRQILPEANSQIVGFRYFNVYGPREGHKGSMASVAFHLNTQLNNGESPKLFEGSENFKRDFVYVGDVADVNLWFLENGVSGIFNLGTGRAESFQAVADATLAYHKKGQIEYIPFPDKLKGRYQAFTQADLTNLRAAGYDKPFKTVAEGVTEYMAWLNRDA</sequence>
<feature type="chain" id="PRO_1000148082" description="ADP-L-glycero-D-manno-heptose-6-epimerase">
    <location>
        <begin position="1"/>
        <end position="310"/>
    </location>
</feature>
<feature type="active site" description="Proton acceptor" evidence="1">
    <location>
        <position position="140"/>
    </location>
</feature>
<feature type="active site" description="Proton acceptor" evidence="1">
    <location>
        <position position="178"/>
    </location>
</feature>
<feature type="binding site" evidence="1">
    <location>
        <begin position="10"/>
        <end position="11"/>
    </location>
    <ligand>
        <name>NADP(+)</name>
        <dbReference type="ChEBI" id="CHEBI:58349"/>
    </ligand>
</feature>
<feature type="binding site" evidence="1">
    <location>
        <begin position="31"/>
        <end position="32"/>
    </location>
    <ligand>
        <name>NADP(+)</name>
        <dbReference type="ChEBI" id="CHEBI:58349"/>
    </ligand>
</feature>
<feature type="binding site" evidence="1">
    <location>
        <position position="38"/>
    </location>
    <ligand>
        <name>NADP(+)</name>
        <dbReference type="ChEBI" id="CHEBI:58349"/>
    </ligand>
</feature>
<feature type="binding site" evidence="1">
    <location>
        <position position="53"/>
    </location>
    <ligand>
        <name>NADP(+)</name>
        <dbReference type="ChEBI" id="CHEBI:58349"/>
    </ligand>
</feature>
<feature type="binding site" evidence="1">
    <location>
        <begin position="75"/>
        <end position="79"/>
    </location>
    <ligand>
        <name>NADP(+)</name>
        <dbReference type="ChEBI" id="CHEBI:58349"/>
    </ligand>
</feature>
<feature type="binding site" evidence="1">
    <location>
        <position position="92"/>
    </location>
    <ligand>
        <name>NADP(+)</name>
        <dbReference type="ChEBI" id="CHEBI:58349"/>
    </ligand>
</feature>
<feature type="binding site" evidence="1">
    <location>
        <position position="144"/>
    </location>
    <ligand>
        <name>NADP(+)</name>
        <dbReference type="ChEBI" id="CHEBI:58349"/>
    </ligand>
</feature>
<feature type="binding site" evidence="1">
    <location>
        <position position="169"/>
    </location>
    <ligand>
        <name>substrate</name>
    </ligand>
</feature>
<feature type="binding site" evidence="1">
    <location>
        <position position="170"/>
    </location>
    <ligand>
        <name>NADP(+)</name>
        <dbReference type="ChEBI" id="CHEBI:58349"/>
    </ligand>
</feature>
<feature type="binding site" evidence="1">
    <location>
        <position position="178"/>
    </location>
    <ligand>
        <name>NADP(+)</name>
        <dbReference type="ChEBI" id="CHEBI:58349"/>
    </ligand>
</feature>
<feature type="binding site" evidence="1">
    <location>
        <position position="180"/>
    </location>
    <ligand>
        <name>substrate</name>
    </ligand>
</feature>
<feature type="binding site" evidence="1">
    <location>
        <position position="187"/>
    </location>
    <ligand>
        <name>substrate</name>
    </ligand>
</feature>
<feature type="binding site" evidence="1">
    <location>
        <begin position="201"/>
        <end position="204"/>
    </location>
    <ligand>
        <name>substrate</name>
    </ligand>
</feature>
<feature type="binding site" evidence="1">
    <location>
        <position position="209"/>
    </location>
    <ligand>
        <name>substrate</name>
    </ligand>
</feature>
<feature type="binding site" evidence="1">
    <location>
        <position position="272"/>
    </location>
    <ligand>
        <name>substrate</name>
    </ligand>
</feature>
<feature type="modified residue" description="N6-acetyllysine" evidence="1">
    <location>
        <position position="267"/>
    </location>
</feature>